<sequence length="360" mass="40586">MFDKLAAVAARYDELTELMAQPEVATNVTLLQQYAREQREIEDIVNAYREYQATQRAIEEAEAMLEDSDPELRALAQEELETQRKRLASLEEQLKLLLLPRDPNDSKDVIMEIRQGEGGDEAALFAADLFRMYTRFAESRGWKVEVDSLTENGIGGIKEVIFQIHGEGAYSQLKYEGGVHRVQRVPATEARGRIHTSTATVAVLPEVEETEIEIKPEDLRIDVFRSAGHGGQGVNTTDSAVRIVYKPGTPEEIVVTCQDGRSQIQNRERAMTVLRARLYAREQEKRQREIGASRLAQVGSGERAEKIRTYNFPQDRITDHRIGQNFSNLPAVLDGELDKIIEALIIYDNAERLRASGVST</sequence>
<protein>
    <recommendedName>
        <fullName evidence="1">Peptide chain release factor 1</fullName>
        <shortName evidence="1">RF-1</shortName>
    </recommendedName>
</protein>
<evidence type="ECO:0000255" key="1">
    <source>
        <dbReference type="HAMAP-Rule" id="MF_00093"/>
    </source>
</evidence>
<comment type="function">
    <text evidence="1">Peptide chain release factor 1 directs the termination of translation in response to the peptide chain termination codons UAG and UAA.</text>
</comment>
<comment type="subcellular location">
    <subcellularLocation>
        <location evidence="1">Cytoplasm</location>
    </subcellularLocation>
</comment>
<comment type="PTM">
    <text evidence="1">Methylated by PrmC. Methylation increases the termination efficiency of RF1.</text>
</comment>
<comment type="similarity">
    <text evidence="1">Belongs to the prokaryotic/mitochondrial release factor family.</text>
</comment>
<keyword id="KW-0963">Cytoplasm</keyword>
<keyword id="KW-0488">Methylation</keyword>
<keyword id="KW-0648">Protein biosynthesis</keyword>
<gene>
    <name evidence="1" type="primary">prfA</name>
    <name type="ordered locus">Chy400_0527</name>
</gene>
<accession>B9LJ02</accession>
<feature type="chain" id="PRO_1000193480" description="Peptide chain release factor 1">
    <location>
        <begin position="1"/>
        <end position="360"/>
    </location>
</feature>
<feature type="modified residue" description="N5-methylglutamine" evidence="1">
    <location>
        <position position="232"/>
    </location>
</feature>
<proteinExistence type="inferred from homology"/>
<organism>
    <name type="scientific">Chloroflexus aurantiacus (strain ATCC 29364 / DSM 637 / Y-400-fl)</name>
    <dbReference type="NCBI Taxonomy" id="480224"/>
    <lineage>
        <taxon>Bacteria</taxon>
        <taxon>Bacillati</taxon>
        <taxon>Chloroflexota</taxon>
        <taxon>Chloroflexia</taxon>
        <taxon>Chloroflexales</taxon>
        <taxon>Chloroflexineae</taxon>
        <taxon>Chloroflexaceae</taxon>
        <taxon>Chloroflexus</taxon>
    </lineage>
</organism>
<reference key="1">
    <citation type="submission" date="2009-01" db="EMBL/GenBank/DDBJ databases">
        <title>Complete sequence of Chloroflexus sp. Y-400-fl.</title>
        <authorList>
            <consortium name="US DOE Joint Genome Institute"/>
            <person name="Lucas S."/>
            <person name="Copeland A."/>
            <person name="Lapidus A."/>
            <person name="Glavina del Rio T."/>
            <person name="Dalin E."/>
            <person name="Tice H."/>
            <person name="Bruce D."/>
            <person name="Goodwin L."/>
            <person name="Pitluck S."/>
            <person name="Sims D."/>
            <person name="Kiss H."/>
            <person name="Brettin T."/>
            <person name="Detter J.C."/>
            <person name="Han C."/>
            <person name="Larimer F."/>
            <person name="Land M."/>
            <person name="Hauser L."/>
            <person name="Kyrpides N."/>
            <person name="Ovchinnikova G."/>
            <person name="Bryant D.A."/>
            <person name="Richardson P."/>
        </authorList>
    </citation>
    <scope>NUCLEOTIDE SEQUENCE [LARGE SCALE GENOMIC DNA]</scope>
    <source>
        <strain>ATCC 29364 / DSM 637 / Y-400-fl</strain>
    </source>
</reference>
<name>RF1_CHLSY</name>
<dbReference type="EMBL" id="CP001364">
    <property type="protein sequence ID" value="ACM51964.1"/>
    <property type="molecule type" value="Genomic_DNA"/>
</dbReference>
<dbReference type="SMR" id="B9LJ02"/>
<dbReference type="KEGG" id="chl:Chy400_0527"/>
<dbReference type="HOGENOM" id="CLU_036856_0_1_0"/>
<dbReference type="OrthoDB" id="9806673at2"/>
<dbReference type="GO" id="GO:0005737">
    <property type="term" value="C:cytoplasm"/>
    <property type="evidence" value="ECO:0007669"/>
    <property type="project" value="UniProtKB-SubCell"/>
</dbReference>
<dbReference type="GO" id="GO:0016149">
    <property type="term" value="F:translation release factor activity, codon specific"/>
    <property type="evidence" value="ECO:0007669"/>
    <property type="project" value="UniProtKB-UniRule"/>
</dbReference>
<dbReference type="FunFam" id="3.30.160.20:FF:000004">
    <property type="entry name" value="Peptide chain release factor 1"/>
    <property type="match status" value="1"/>
</dbReference>
<dbReference type="FunFam" id="3.30.70.1660:FF:000002">
    <property type="entry name" value="Peptide chain release factor 1"/>
    <property type="match status" value="1"/>
</dbReference>
<dbReference type="Gene3D" id="3.30.160.20">
    <property type="match status" value="1"/>
</dbReference>
<dbReference type="Gene3D" id="3.30.70.1660">
    <property type="match status" value="2"/>
</dbReference>
<dbReference type="Gene3D" id="6.10.140.1950">
    <property type="match status" value="1"/>
</dbReference>
<dbReference type="HAMAP" id="MF_00093">
    <property type="entry name" value="Rel_fac_1"/>
    <property type="match status" value="1"/>
</dbReference>
<dbReference type="InterPro" id="IPR005139">
    <property type="entry name" value="PCRF"/>
</dbReference>
<dbReference type="InterPro" id="IPR000352">
    <property type="entry name" value="Pep_chain_release_fac_I"/>
</dbReference>
<dbReference type="InterPro" id="IPR045853">
    <property type="entry name" value="Pep_chain_release_fac_I_sf"/>
</dbReference>
<dbReference type="InterPro" id="IPR050057">
    <property type="entry name" value="Prokaryotic/Mito_RF"/>
</dbReference>
<dbReference type="InterPro" id="IPR004373">
    <property type="entry name" value="RF-1"/>
</dbReference>
<dbReference type="NCBIfam" id="TIGR00019">
    <property type="entry name" value="prfA"/>
    <property type="match status" value="1"/>
</dbReference>
<dbReference type="NCBIfam" id="NF001859">
    <property type="entry name" value="PRK00591.1"/>
    <property type="match status" value="1"/>
</dbReference>
<dbReference type="PANTHER" id="PTHR43804">
    <property type="entry name" value="LD18447P"/>
    <property type="match status" value="1"/>
</dbReference>
<dbReference type="PANTHER" id="PTHR43804:SF7">
    <property type="entry name" value="LD18447P"/>
    <property type="match status" value="1"/>
</dbReference>
<dbReference type="Pfam" id="PF03462">
    <property type="entry name" value="PCRF"/>
    <property type="match status" value="1"/>
</dbReference>
<dbReference type="Pfam" id="PF00472">
    <property type="entry name" value="RF-1"/>
    <property type="match status" value="1"/>
</dbReference>
<dbReference type="SMART" id="SM00937">
    <property type="entry name" value="PCRF"/>
    <property type="match status" value="1"/>
</dbReference>
<dbReference type="SUPFAM" id="SSF75620">
    <property type="entry name" value="Release factor"/>
    <property type="match status" value="1"/>
</dbReference>
<dbReference type="PROSITE" id="PS00745">
    <property type="entry name" value="RF_PROK_I"/>
    <property type="match status" value="1"/>
</dbReference>